<comment type="function">
    <text evidence="3">May transport zinc.</text>
</comment>
<comment type="subcellular location">
    <subcellularLocation>
        <location evidence="3">Membrane</location>
        <topology evidence="3">Multi-pass membrane protein</topology>
    </subcellularLocation>
</comment>
<comment type="alternative products">
    <event type="alternative splicing"/>
    <isoform>
        <id>Q9C9Z1-1</id>
        <name>1</name>
        <sequence type="displayed"/>
    </isoform>
    <isoform>
        <id>Q9C9Z1-2</id>
        <name>2</name>
        <sequence type="described" ref="VSP_039978"/>
    </isoform>
</comment>
<comment type="similarity">
    <text evidence="3">Belongs to the ZIP transporter (TC 2.A.5) family. ZupT subfamily.</text>
</comment>
<comment type="sequence caution" evidence="3">
    <conflict type="miscellaneous discrepancy">
        <sequence resource="EMBL" id="BX822928"/>
    </conflict>
    <text>Sequencing errors.</text>
</comment>
<accession>Q9C9Z1</accession>
<accession>Q8L600</accession>
<keyword id="KW-0025">Alternative splicing</keyword>
<keyword id="KW-0406">Ion transport</keyword>
<keyword id="KW-0472">Membrane</keyword>
<keyword id="KW-1185">Reference proteome</keyword>
<keyword id="KW-0812">Transmembrane</keyword>
<keyword id="KW-1133">Transmembrane helix</keyword>
<keyword id="KW-0813">Transport</keyword>
<keyword id="KW-0862">Zinc</keyword>
<keyword id="KW-0864">Zinc transport</keyword>
<reference key="1">
    <citation type="journal article" date="2000" name="Nature">
        <title>Sequence and analysis of chromosome 3 of the plant Arabidopsis thaliana.</title>
        <authorList>
            <person name="Salanoubat M."/>
            <person name="Lemcke K."/>
            <person name="Rieger M."/>
            <person name="Ansorge W."/>
            <person name="Unseld M."/>
            <person name="Fartmann B."/>
            <person name="Valle G."/>
            <person name="Bloecker H."/>
            <person name="Perez-Alonso M."/>
            <person name="Obermaier B."/>
            <person name="Delseny M."/>
            <person name="Boutry M."/>
            <person name="Grivell L.A."/>
            <person name="Mache R."/>
            <person name="Puigdomenech P."/>
            <person name="De Simone V."/>
            <person name="Choisne N."/>
            <person name="Artiguenave F."/>
            <person name="Robert C."/>
            <person name="Brottier P."/>
            <person name="Wincker P."/>
            <person name="Cattolico L."/>
            <person name="Weissenbach J."/>
            <person name="Saurin W."/>
            <person name="Quetier F."/>
            <person name="Schaefer M."/>
            <person name="Mueller-Auer S."/>
            <person name="Gabel C."/>
            <person name="Fuchs M."/>
            <person name="Benes V."/>
            <person name="Wurmbach E."/>
            <person name="Drzonek H."/>
            <person name="Erfle H."/>
            <person name="Jordan N."/>
            <person name="Bangert S."/>
            <person name="Wiedelmann R."/>
            <person name="Kranz H."/>
            <person name="Voss H."/>
            <person name="Holland R."/>
            <person name="Brandt P."/>
            <person name="Nyakatura G."/>
            <person name="Vezzi A."/>
            <person name="D'Angelo M."/>
            <person name="Pallavicini A."/>
            <person name="Toppo S."/>
            <person name="Simionati B."/>
            <person name="Conrad A."/>
            <person name="Hornischer K."/>
            <person name="Kauer G."/>
            <person name="Loehnert T.-H."/>
            <person name="Nordsiek G."/>
            <person name="Reichelt J."/>
            <person name="Scharfe M."/>
            <person name="Schoen O."/>
            <person name="Bargues M."/>
            <person name="Terol J."/>
            <person name="Climent J."/>
            <person name="Navarro P."/>
            <person name="Collado C."/>
            <person name="Perez-Perez A."/>
            <person name="Ottenwaelder B."/>
            <person name="Duchemin D."/>
            <person name="Cooke R."/>
            <person name="Laudie M."/>
            <person name="Berger-Llauro C."/>
            <person name="Purnelle B."/>
            <person name="Masuy D."/>
            <person name="de Haan M."/>
            <person name="Maarse A.C."/>
            <person name="Alcaraz J.-P."/>
            <person name="Cottet A."/>
            <person name="Casacuberta E."/>
            <person name="Monfort A."/>
            <person name="Argiriou A."/>
            <person name="Flores M."/>
            <person name="Liguori R."/>
            <person name="Vitale D."/>
            <person name="Mannhaupt G."/>
            <person name="Haase D."/>
            <person name="Schoof H."/>
            <person name="Rudd S."/>
            <person name="Zaccaria P."/>
            <person name="Mewes H.-W."/>
            <person name="Mayer K.F.X."/>
            <person name="Kaul S."/>
            <person name="Town C.D."/>
            <person name="Koo H.L."/>
            <person name="Tallon L.J."/>
            <person name="Jenkins J."/>
            <person name="Rooney T."/>
            <person name="Rizzo M."/>
            <person name="Walts A."/>
            <person name="Utterback T."/>
            <person name="Fujii C.Y."/>
            <person name="Shea T.P."/>
            <person name="Creasy T.H."/>
            <person name="Haas B."/>
            <person name="Maiti R."/>
            <person name="Wu D."/>
            <person name="Peterson J."/>
            <person name="Van Aken S."/>
            <person name="Pai G."/>
            <person name="Militscher J."/>
            <person name="Sellers P."/>
            <person name="Gill J.E."/>
            <person name="Feldblyum T.V."/>
            <person name="Preuss D."/>
            <person name="Lin X."/>
            <person name="Nierman W.C."/>
            <person name="Salzberg S.L."/>
            <person name="White O."/>
            <person name="Venter J.C."/>
            <person name="Fraser C.M."/>
            <person name="Kaneko T."/>
            <person name="Nakamura Y."/>
            <person name="Sato S."/>
            <person name="Kato T."/>
            <person name="Asamizu E."/>
            <person name="Sasamoto S."/>
            <person name="Kimura T."/>
            <person name="Idesawa K."/>
            <person name="Kawashima K."/>
            <person name="Kishida Y."/>
            <person name="Kiyokawa C."/>
            <person name="Kohara M."/>
            <person name="Matsumoto M."/>
            <person name="Matsuno A."/>
            <person name="Muraki A."/>
            <person name="Nakayama S."/>
            <person name="Nakazaki N."/>
            <person name="Shinpo S."/>
            <person name="Takeuchi C."/>
            <person name="Wada T."/>
            <person name="Watanabe A."/>
            <person name="Yamada M."/>
            <person name="Yasuda M."/>
            <person name="Tabata S."/>
        </authorList>
    </citation>
    <scope>NUCLEOTIDE SEQUENCE [LARGE SCALE GENOMIC DNA]</scope>
    <source>
        <strain>cv. Columbia</strain>
    </source>
</reference>
<reference key="2">
    <citation type="journal article" date="2017" name="Plant J.">
        <title>Araport11: a complete reannotation of the Arabidopsis thaliana reference genome.</title>
        <authorList>
            <person name="Cheng C.Y."/>
            <person name="Krishnakumar V."/>
            <person name="Chan A.P."/>
            <person name="Thibaud-Nissen F."/>
            <person name="Schobel S."/>
            <person name="Town C.D."/>
        </authorList>
    </citation>
    <scope>GENOME REANNOTATION</scope>
    <source>
        <strain>cv. Columbia</strain>
    </source>
</reference>
<reference key="3">
    <citation type="journal article" date="2003" name="Science">
        <title>Empirical analysis of transcriptional activity in the Arabidopsis genome.</title>
        <authorList>
            <person name="Yamada K."/>
            <person name="Lim J."/>
            <person name="Dale J.M."/>
            <person name="Chen H."/>
            <person name="Shinn P."/>
            <person name="Palm C.J."/>
            <person name="Southwick A.M."/>
            <person name="Wu H.C."/>
            <person name="Kim C.J."/>
            <person name="Nguyen M."/>
            <person name="Pham P.K."/>
            <person name="Cheuk R.F."/>
            <person name="Karlin-Newmann G."/>
            <person name="Liu S.X."/>
            <person name="Lam B."/>
            <person name="Sakano H."/>
            <person name="Wu T."/>
            <person name="Yu G."/>
            <person name="Miranda M."/>
            <person name="Quach H.L."/>
            <person name="Tripp M."/>
            <person name="Chang C.H."/>
            <person name="Lee J.M."/>
            <person name="Toriumi M.J."/>
            <person name="Chan M.M."/>
            <person name="Tang C.C."/>
            <person name="Onodera C.S."/>
            <person name="Deng J.M."/>
            <person name="Akiyama K."/>
            <person name="Ansari Y."/>
            <person name="Arakawa T."/>
            <person name="Banh J."/>
            <person name="Banno F."/>
            <person name="Bowser L."/>
            <person name="Brooks S.Y."/>
            <person name="Carninci P."/>
            <person name="Chao Q."/>
            <person name="Choy N."/>
            <person name="Enju A."/>
            <person name="Goldsmith A.D."/>
            <person name="Gurjal M."/>
            <person name="Hansen N.F."/>
            <person name="Hayashizaki Y."/>
            <person name="Johnson-Hopson C."/>
            <person name="Hsuan V.W."/>
            <person name="Iida K."/>
            <person name="Karnes M."/>
            <person name="Khan S."/>
            <person name="Koesema E."/>
            <person name="Ishida J."/>
            <person name="Jiang P.X."/>
            <person name="Jones T."/>
            <person name="Kawai J."/>
            <person name="Kamiya A."/>
            <person name="Meyers C."/>
            <person name="Nakajima M."/>
            <person name="Narusaka M."/>
            <person name="Seki M."/>
            <person name="Sakurai T."/>
            <person name="Satou M."/>
            <person name="Tamse R."/>
            <person name="Vaysberg M."/>
            <person name="Wallender E.K."/>
            <person name="Wong C."/>
            <person name="Yamamura Y."/>
            <person name="Yuan S."/>
            <person name="Shinozaki K."/>
            <person name="Davis R.W."/>
            <person name="Theologis A."/>
            <person name="Ecker J.R."/>
        </authorList>
    </citation>
    <scope>NUCLEOTIDE SEQUENCE [LARGE SCALE MRNA] (ISOFORM 2)</scope>
    <source>
        <strain>cv. Columbia</strain>
    </source>
</reference>
<reference key="4">
    <citation type="journal article" date="2004" name="Genome Res.">
        <title>Whole genome sequence comparisons and 'full-length' cDNA sequences: a combined approach to evaluate and improve Arabidopsis genome annotation.</title>
        <authorList>
            <person name="Castelli V."/>
            <person name="Aury J.-M."/>
            <person name="Jaillon O."/>
            <person name="Wincker P."/>
            <person name="Clepet C."/>
            <person name="Menard M."/>
            <person name="Cruaud C."/>
            <person name="Quetier F."/>
            <person name="Scarpelli C."/>
            <person name="Schaechter V."/>
            <person name="Temple G."/>
            <person name="Caboche M."/>
            <person name="Weissenbach J."/>
            <person name="Salanoubat M."/>
        </authorList>
    </citation>
    <scope>NUCLEOTIDE SEQUENCE [LARGE SCALE MRNA] (ISOFORM 1)</scope>
    <source>
        <strain>cv. Columbia</strain>
    </source>
</reference>
<name>ZTP50_ARATH</name>
<proteinExistence type="evidence at transcript level"/>
<protein>
    <recommendedName>
        <fullName>Putative zinc transporter At3g08650</fullName>
    </recommendedName>
</protein>
<gene>
    <name type="ordered locus">At3g08650</name>
    <name type="ORF">F17O14.12</name>
</gene>
<feature type="chain" id="PRO_0000400018" description="Putative zinc transporter At3g08650">
    <location>
        <begin position="1"/>
        <end position="619"/>
    </location>
</feature>
<feature type="transmembrane region" description="Helical" evidence="1">
    <location>
        <begin position="25"/>
        <end position="45"/>
    </location>
</feature>
<feature type="transmembrane region" description="Helical" evidence="1">
    <location>
        <begin position="102"/>
        <end position="122"/>
    </location>
</feature>
<feature type="transmembrane region" description="Helical" evidence="1">
    <location>
        <begin position="129"/>
        <end position="149"/>
    </location>
</feature>
<feature type="transmembrane region" description="Helical" evidence="1">
    <location>
        <begin position="155"/>
        <end position="175"/>
    </location>
</feature>
<feature type="transmembrane region" description="Helical" evidence="1">
    <location>
        <begin position="198"/>
        <end position="218"/>
    </location>
</feature>
<feature type="transmembrane region" description="Helical" evidence="1">
    <location>
        <begin position="230"/>
        <end position="250"/>
    </location>
</feature>
<feature type="transmembrane region" description="Helical" evidence="1">
    <location>
        <begin position="261"/>
        <end position="281"/>
    </location>
</feature>
<feature type="transmembrane region" description="Helical" evidence="1">
    <location>
        <begin position="289"/>
        <end position="309"/>
    </location>
</feature>
<feature type="transmembrane region" description="Helical" evidence="1">
    <location>
        <begin position="354"/>
        <end position="374"/>
    </location>
</feature>
<feature type="transmembrane region" description="Helical" evidence="1">
    <location>
        <begin position="383"/>
        <end position="403"/>
    </location>
</feature>
<feature type="transmembrane region" description="Helical" evidence="1">
    <location>
        <begin position="405"/>
        <end position="425"/>
    </location>
</feature>
<feature type="transmembrane region" description="Helical" evidence="1">
    <location>
        <begin position="465"/>
        <end position="485"/>
    </location>
</feature>
<feature type="transmembrane region" description="Helical" evidence="1">
    <location>
        <begin position="528"/>
        <end position="548"/>
    </location>
</feature>
<feature type="transmembrane region" description="Helical" evidence="1">
    <location>
        <begin position="552"/>
        <end position="572"/>
    </location>
</feature>
<feature type="transmembrane region" description="Helical" evidence="1">
    <location>
        <begin position="585"/>
        <end position="605"/>
    </location>
</feature>
<feature type="splice variant" id="VSP_039978" description="In isoform 2." evidence="2">
    <location>
        <begin position="1"/>
        <end position="24"/>
    </location>
</feature>
<feature type="sequence conflict" description="In Ref. 3; AAM20614/AAN15618." evidence="3" ref="3">
    <original>H</original>
    <variation>N</variation>
    <location>
        <position position="555"/>
    </location>
</feature>
<organism>
    <name type="scientific">Arabidopsis thaliana</name>
    <name type="common">Mouse-ear cress</name>
    <dbReference type="NCBI Taxonomy" id="3702"/>
    <lineage>
        <taxon>Eukaryota</taxon>
        <taxon>Viridiplantae</taxon>
        <taxon>Streptophyta</taxon>
        <taxon>Embryophyta</taxon>
        <taxon>Tracheophyta</taxon>
        <taxon>Spermatophyta</taxon>
        <taxon>Magnoliopsida</taxon>
        <taxon>eudicotyledons</taxon>
        <taxon>Gunneridae</taxon>
        <taxon>Pentapetalae</taxon>
        <taxon>rosids</taxon>
        <taxon>malvids</taxon>
        <taxon>Brassicales</taxon>
        <taxon>Brassicaceae</taxon>
        <taxon>Camelineae</taxon>
        <taxon>Arabidopsis</taxon>
    </lineage>
</organism>
<sequence length="619" mass="64744">MFVRSNILRALIFTVLEKTCLEIKMMHSSCKGLVLLLFLFVVVFIGNTDANAQWEVSHKVRASPHENMGRNVIDGSGVEKTLHDIGMGEKRGTHNKVSVSTVALFTLAMAAATGLGAVPFFFVELDPQWAGICNGMAAGVMLAASFDLVKEGQEHGSGNWVVTGILAGALFIWLCKQILEQYGEVSMLDIKGADATKVVLVIGIMTLHSFGEGSGVGVSFAGSKGFSQGLLVTLAIAVHNIPEGLAVSMVLASRGVSPQNAMLWSIITSLPQPLVAVPAFLCADAFSKFLPFCTGFAAGCMIWMVIAEVLPDAFKEASPSQVASAATISVASMEALSTLFESFTHDYNSEDASGFFVSLLFGLGPLLGGVFLVASAVTFRLQHALLMGVASGIAFVLGLWRPLQLLLSAKMGLIPLVSLLAIGAGLSHFTSSTILNVTGRKKSRAGSLINPVTNFPTSVITLQSLLACGAVGFHALAEGLALGVAAPNAYGLGRHMVLPVSLHGLPRGTAVASCVFGATDSWHAALAAAALIGFVGPISAIGSILAGIDYSGLDHVMVVACGGLLPSFWQVIKRAVRLERRKGSVGMVLGLACAVVCLTFTRLVCLHTPYCNSAPEAVR</sequence>
<dbReference type="EMBL" id="AC012562">
    <property type="protein sequence ID" value="AAG51350.1"/>
    <property type="molecule type" value="Genomic_DNA"/>
</dbReference>
<dbReference type="EMBL" id="CP002686">
    <property type="protein sequence ID" value="AEE74658.1"/>
    <property type="molecule type" value="Genomic_DNA"/>
</dbReference>
<dbReference type="EMBL" id="CP002686">
    <property type="protein sequence ID" value="AEE74659.1"/>
    <property type="molecule type" value="Genomic_DNA"/>
</dbReference>
<dbReference type="EMBL" id="AY099763">
    <property type="protein sequence ID" value="AAM20614.1"/>
    <property type="molecule type" value="mRNA"/>
</dbReference>
<dbReference type="EMBL" id="BT000299">
    <property type="protein sequence ID" value="AAN15618.1"/>
    <property type="molecule type" value="mRNA"/>
</dbReference>
<dbReference type="EMBL" id="BX822928">
    <property type="status" value="NOT_ANNOTATED_CDS"/>
    <property type="molecule type" value="mRNA"/>
</dbReference>
<dbReference type="RefSeq" id="NP_187477.1">
    <molecule id="Q9C9Z1-2"/>
    <property type="nucleotide sequence ID" value="NM_111699.6"/>
</dbReference>
<dbReference type="RefSeq" id="NP_974256.1">
    <molecule id="Q9C9Z1-1"/>
    <property type="nucleotide sequence ID" value="NM_202527.1"/>
</dbReference>
<dbReference type="SMR" id="Q9C9Z1"/>
<dbReference type="FunCoup" id="Q9C9Z1">
    <property type="interactions" value="1750"/>
</dbReference>
<dbReference type="STRING" id="3702.Q9C9Z1"/>
<dbReference type="PaxDb" id="3702-AT3G08650.2"/>
<dbReference type="ProteomicsDB" id="242969">
    <molecule id="Q9C9Z1-1"/>
</dbReference>
<dbReference type="EnsemblPlants" id="AT3G08650.1">
    <molecule id="Q9C9Z1-2"/>
    <property type="protein sequence ID" value="AT3G08650.1"/>
    <property type="gene ID" value="AT3G08650"/>
</dbReference>
<dbReference type="EnsemblPlants" id="AT3G08650.2">
    <molecule id="Q9C9Z1-1"/>
    <property type="protein sequence ID" value="AT3G08650.2"/>
    <property type="gene ID" value="AT3G08650"/>
</dbReference>
<dbReference type="GeneID" id="820012"/>
<dbReference type="Gramene" id="AT3G08650.1">
    <molecule id="Q9C9Z1-2"/>
    <property type="protein sequence ID" value="AT3G08650.1"/>
    <property type="gene ID" value="AT3G08650"/>
</dbReference>
<dbReference type="Gramene" id="AT3G08650.2">
    <molecule id="Q9C9Z1-1"/>
    <property type="protein sequence ID" value="AT3G08650.2"/>
    <property type="gene ID" value="AT3G08650"/>
</dbReference>
<dbReference type="KEGG" id="ath:AT3G08650"/>
<dbReference type="Araport" id="AT3G08650"/>
<dbReference type="TAIR" id="AT3G08650"/>
<dbReference type="eggNOG" id="KOG2474">
    <property type="taxonomic scope" value="Eukaryota"/>
</dbReference>
<dbReference type="InParanoid" id="Q9C9Z1"/>
<dbReference type="OMA" id="FGATDNW"/>
<dbReference type="PhylomeDB" id="Q9C9Z1"/>
<dbReference type="PRO" id="PR:Q9C9Z1"/>
<dbReference type="Proteomes" id="UP000006548">
    <property type="component" value="Chromosome 3"/>
</dbReference>
<dbReference type="ExpressionAtlas" id="Q9C9Z1">
    <property type="expression patterns" value="baseline and differential"/>
</dbReference>
<dbReference type="GO" id="GO:0016020">
    <property type="term" value="C:membrane"/>
    <property type="evidence" value="ECO:0007669"/>
    <property type="project" value="UniProtKB-SubCell"/>
</dbReference>
<dbReference type="GO" id="GO:0046873">
    <property type="term" value="F:metal ion transmembrane transporter activity"/>
    <property type="evidence" value="ECO:0007669"/>
    <property type="project" value="InterPro"/>
</dbReference>
<dbReference type="GO" id="GO:0006829">
    <property type="term" value="P:zinc ion transport"/>
    <property type="evidence" value="ECO:0007669"/>
    <property type="project" value="UniProtKB-KW"/>
</dbReference>
<dbReference type="InterPro" id="IPR003689">
    <property type="entry name" value="ZIP"/>
</dbReference>
<dbReference type="PANTHER" id="PTHR11040:SF70">
    <property type="entry name" value="OS05G0316100 PROTEIN"/>
    <property type="match status" value="1"/>
</dbReference>
<dbReference type="PANTHER" id="PTHR11040">
    <property type="entry name" value="ZINC/IRON TRANSPORTER"/>
    <property type="match status" value="1"/>
</dbReference>
<dbReference type="Pfam" id="PF02535">
    <property type="entry name" value="Zip"/>
    <property type="match status" value="1"/>
</dbReference>
<evidence type="ECO:0000255" key="1"/>
<evidence type="ECO:0000303" key="2">
    <source>
    </source>
</evidence>
<evidence type="ECO:0000305" key="3"/>